<reference key="1">
    <citation type="submission" date="2008-06" db="EMBL/GenBank/DDBJ databases">
        <title>Complete sequence of chromosome of Prosthecochloris aestuarii DSM 271.</title>
        <authorList>
            <consortium name="US DOE Joint Genome Institute"/>
            <person name="Lucas S."/>
            <person name="Copeland A."/>
            <person name="Lapidus A."/>
            <person name="Glavina del Rio T."/>
            <person name="Dalin E."/>
            <person name="Tice H."/>
            <person name="Bruce D."/>
            <person name="Goodwin L."/>
            <person name="Pitluck S."/>
            <person name="Schmutz J."/>
            <person name="Larimer F."/>
            <person name="Land M."/>
            <person name="Hauser L."/>
            <person name="Kyrpides N."/>
            <person name="Anderson I."/>
            <person name="Liu Z."/>
            <person name="Li T."/>
            <person name="Zhao F."/>
            <person name="Overmann J."/>
            <person name="Bryant D.A."/>
            <person name="Richardson P."/>
        </authorList>
    </citation>
    <scope>NUCLEOTIDE SEQUENCE [LARGE SCALE GENOMIC DNA]</scope>
    <source>
        <strain>DSM 271 / SK 413</strain>
    </source>
</reference>
<comment type="function">
    <text evidence="1">Associates with the EF-Tu.GDP complex and induces the exchange of GDP to GTP. It remains bound to the aminoacyl-tRNA.EF-Tu.GTP complex up to the GTP hydrolysis stage on the ribosome.</text>
</comment>
<comment type="subcellular location">
    <subcellularLocation>
        <location evidence="1">Cytoplasm</location>
    </subcellularLocation>
</comment>
<comment type="similarity">
    <text evidence="1">Belongs to the EF-Ts family.</text>
</comment>
<accession>B4S429</accession>
<keyword id="KW-0963">Cytoplasm</keyword>
<keyword id="KW-0251">Elongation factor</keyword>
<keyword id="KW-0648">Protein biosynthesis</keyword>
<dbReference type="EMBL" id="CP001108">
    <property type="protein sequence ID" value="ACF46821.1"/>
    <property type="molecule type" value="Genomic_DNA"/>
</dbReference>
<dbReference type="RefSeq" id="WP_012506354.1">
    <property type="nucleotide sequence ID" value="NC_011059.1"/>
</dbReference>
<dbReference type="SMR" id="B4S429"/>
<dbReference type="STRING" id="290512.Paes_1809"/>
<dbReference type="KEGG" id="paa:Paes_1809"/>
<dbReference type="eggNOG" id="COG0264">
    <property type="taxonomic scope" value="Bacteria"/>
</dbReference>
<dbReference type="HOGENOM" id="CLU_047155_0_0_10"/>
<dbReference type="Proteomes" id="UP000002725">
    <property type="component" value="Chromosome"/>
</dbReference>
<dbReference type="GO" id="GO:0005737">
    <property type="term" value="C:cytoplasm"/>
    <property type="evidence" value="ECO:0007669"/>
    <property type="project" value="UniProtKB-SubCell"/>
</dbReference>
<dbReference type="GO" id="GO:0003746">
    <property type="term" value="F:translation elongation factor activity"/>
    <property type="evidence" value="ECO:0007669"/>
    <property type="project" value="UniProtKB-UniRule"/>
</dbReference>
<dbReference type="CDD" id="cd14275">
    <property type="entry name" value="UBA_EF-Ts"/>
    <property type="match status" value="1"/>
</dbReference>
<dbReference type="FunFam" id="1.10.286.20:FF:000001">
    <property type="entry name" value="Elongation factor Ts"/>
    <property type="match status" value="1"/>
</dbReference>
<dbReference type="FunFam" id="1.10.8.10:FF:000001">
    <property type="entry name" value="Elongation factor Ts"/>
    <property type="match status" value="1"/>
</dbReference>
<dbReference type="Gene3D" id="1.10.286.20">
    <property type="match status" value="1"/>
</dbReference>
<dbReference type="Gene3D" id="1.10.8.10">
    <property type="entry name" value="DNA helicase RuvA subunit, C-terminal domain"/>
    <property type="match status" value="1"/>
</dbReference>
<dbReference type="Gene3D" id="3.30.479.20">
    <property type="entry name" value="Elongation factor Ts, dimerisation domain"/>
    <property type="match status" value="2"/>
</dbReference>
<dbReference type="HAMAP" id="MF_00050">
    <property type="entry name" value="EF_Ts"/>
    <property type="match status" value="1"/>
</dbReference>
<dbReference type="InterPro" id="IPR036402">
    <property type="entry name" value="EF-Ts_dimer_sf"/>
</dbReference>
<dbReference type="InterPro" id="IPR001816">
    <property type="entry name" value="Transl_elong_EFTs/EF1B"/>
</dbReference>
<dbReference type="InterPro" id="IPR014039">
    <property type="entry name" value="Transl_elong_EFTs/EF1B_dimer"/>
</dbReference>
<dbReference type="InterPro" id="IPR018101">
    <property type="entry name" value="Transl_elong_Ts_CS"/>
</dbReference>
<dbReference type="InterPro" id="IPR009060">
    <property type="entry name" value="UBA-like_sf"/>
</dbReference>
<dbReference type="NCBIfam" id="TIGR00116">
    <property type="entry name" value="tsf"/>
    <property type="match status" value="1"/>
</dbReference>
<dbReference type="PANTHER" id="PTHR11741">
    <property type="entry name" value="ELONGATION FACTOR TS"/>
    <property type="match status" value="1"/>
</dbReference>
<dbReference type="PANTHER" id="PTHR11741:SF0">
    <property type="entry name" value="ELONGATION FACTOR TS, MITOCHONDRIAL"/>
    <property type="match status" value="1"/>
</dbReference>
<dbReference type="Pfam" id="PF00889">
    <property type="entry name" value="EF_TS"/>
    <property type="match status" value="1"/>
</dbReference>
<dbReference type="SUPFAM" id="SSF54713">
    <property type="entry name" value="Elongation factor Ts (EF-Ts), dimerisation domain"/>
    <property type="match status" value="2"/>
</dbReference>
<dbReference type="SUPFAM" id="SSF46934">
    <property type="entry name" value="UBA-like"/>
    <property type="match status" value="1"/>
</dbReference>
<dbReference type="PROSITE" id="PS01126">
    <property type="entry name" value="EF_TS_1"/>
    <property type="match status" value="1"/>
</dbReference>
<dbReference type="PROSITE" id="PS01127">
    <property type="entry name" value="EF_TS_2"/>
    <property type="match status" value="1"/>
</dbReference>
<gene>
    <name evidence="1" type="primary">tsf</name>
    <name type="ordered locus">Paes_1809</name>
</gene>
<name>EFTS_PROA2</name>
<sequence length="288" mass="31165">MSQISAKDVKDLRDKTGVGMMDCKKALEETGGDMQKAIEYLRKKGAALAAKRAGREASEGIIAIRISDDNTSGVIIELNCETDFVARGDDFTGFAAAIADLALENGIASAEAMMSLKLGEAYGNESVEDSIKTMTGRLGEKIDLKRLSLLQTSTGIIASYIHPGSQLGAIVELATDKPAESAELARDIAMQVAASSPIVVDRSVVPAENIEKEKEIFRQQALSQGKPEQFVEKIVTGRLEKYYQEVVLLEQPFIKDSNSRVQGVLEEFARKNGAAVSVTRFVRYQLGA</sequence>
<evidence type="ECO:0000255" key="1">
    <source>
        <dbReference type="HAMAP-Rule" id="MF_00050"/>
    </source>
</evidence>
<organism>
    <name type="scientific">Prosthecochloris aestuarii (strain DSM 271 / SK 413)</name>
    <dbReference type="NCBI Taxonomy" id="290512"/>
    <lineage>
        <taxon>Bacteria</taxon>
        <taxon>Pseudomonadati</taxon>
        <taxon>Chlorobiota</taxon>
        <taxon>Chlorobiia</taxon>
        <taxon>Chlorobiales</taxon>
        <taxon>Chlorobiaceae</taxon>
        <taxon>Prosthecochloris</taxon>
    </lineage>
</organism>
<proteinExistence type="inferred from homology"/>
<feature type="chain" id="PRO_1000116771" description="Elongation factor Ts">
    <location>
        <begin position="1"/>
        <end position="288"/>
    </location>
</feature>
<feature type="region of interest" description="Involved in Mg(2+) ion dislocation from EF-Tu" evidence="1">
    <location>
        <begin position="82"/>
        <end position="85"/>
    </location>
</feature>
<protein>
    <recommendedName>
        <fullName evidence="1">Elongation factor Ts</fullName>
        <shortName evidence="1">EF-Ts</shortName>
    </recommendedName>
</protein>